<evidence type="ECO:0000255" key="1">
    <source>
        <dbReference type="HAMAP-Rule" id="MF_01636"/>
    </source>
</evidence>
<proteinExistence type="inferred from homology"/>
<dbReference type="EC" id="4.1.1.98" evidence="1"/>
<dbReference type="EMBL" id="AL157959">
    <property type="protein sequence ID" value="CAM09064.1"/>
    <property type="molecule type" value="Genomic_DNA"/>
</dbReference>
<dbReference type="PIR" id="F81823">
    <property type="entry name" value="F81823"/>
</dbReference>
<dbReference type="RefSeq" id="WP_010981257.1">
    <property type="nucleotide sequence ID" value="NC_003116.1"/>
</dbReference>
<dbReference type="SMR" id="Q9JT68"/>
<dbReference type="EnsemblBacteria" id="CAM09064">
    <property type="protein sequence ID" value="CAM09064"/>
    <property type="gene ID" value="NMA1952"/>
</dbReference>
<dbReference type="KEGG" id="nma:NMA1952"/>
<dbReference type="HOGENOM" id="CLU_023348_4_1_4"/>
<dbReference type="UniPathway" id="UPA00232"/>
<dbReference type="Proteomes" id="UP000000626">
    <property type="component" value="Chromosome"/>
</dbReference>
<dbReference type="GO" id="GO:0005829">
    <property type="term" value="C:cytosol"/>
    <property type="evidence" value="ECO:0007669"/>
    <property type="project" value="TreeGrafter"/>
</dbReference>
<dbReference type="GO" id="GO:0005886">
    <property type="term" value="C:plasma membrane"/>
    <property type="evidence" value="ECO:0007669"/>
    <property type="project" value="UniProtKB-SubCell"/>
</dbReference>
<dbReference type="GO" id="GO:0008694">
    <property type="term" value="F:3-octaprenyl-4-hydroxybenzoate carboxy-lyase activity"/>
    <property type="evidence" value="ECO:0007669"/>
    <property type="project" value="UniProtKB-UniRule"/>
</dbReference>
<dbReference type="GO" id="GO:0046872">
    <property type="term" value="F:metal ion binding"/>
    <property type="evidence" value="ECO:0007669"/>
    <property type="project" value="UniProtKB-KW"/>
</dbReference>
<dbReference type="GO" id="GO:0006744">
    <property type="term" value="P:ubiquinone biosynthetic process"/>
    <property type="evidence" value="ECO:0007669"/>
    <property type="project" value="UniProtKB-UniRule"/>
</dbReference>
<dbReference type="FunFam" id="1.20.5.570:FF:000001">
    <property type="entry name" value="3-octaprenyl-4-hydroxybenzoate carboxy-lyase"/>
    <property type="match status" value="1"/>
</dbReference>
<dbReference type="FunFam" id="3.40.1670.10:FF:000001">
    <property type="entry name" value="3-octaprenyl-4-hydroxybenzoate carboxy-lyase"/>
    <property type="match status" value="1"/>
</dbReference>
<dbReference type="Gene3D" id="1.20.5.570">
    <property type="entry name" value="Single helix bin"/>
    <property type="match status" value="1"/>
</dbReference>
<dbReference type="Gene3D" id="3.40.1670.10">
    <property type="entry name" value="UbiD C-terminal domain-like"/>
    <property type="match status" value="1"/>
</dbReference>
<dbReference type="HAMAP" id="MF_01636">
    <property type="entry name" value="UbiD"/>
    <property type="match status" value="1"/>
</dbReference>
<dbReference type="InterPro" id="IPR002830">
    <property type="entry name" value="UbiD"/>
</dbReference>
<dbReference type="InterPro" id="IPR049381">
    <property type="entry name" value="UbiD-like_C"/>
</dbReference>
<dbReference type="InterPro" id="IPR049383">
    <property type="entry name" value="UbiD-like_N"/>
</dbReference>
<dbReference type="InterPro" id="IPR023677">
    <property type="entry name" value="UbiD_bacteria"/>
</dbReference>
<dbReference type="InterPro" id="IPR048304">
    <property type="entry name" value="UbiD_Rift_dom"/>
</dbReference>
<dbReference type="NCBIfam" id="NF008175">
    <property type="entry name" value="PRK10922.1"/>
    <property type="match status" value="1"/>
</dbReference>
<dbReference type="NCBIfam" id="TIGR00148">
    <property type="entry name" value="UbiD family decarboxylase"/>
    <property type="match status" value="1"/>
</dbReference>
<dbReference type="PANTHER" id="PTHR30108">
    <property type="entry name" value="3-OCTAPRENYL-4-HYDROXYBENZOATE CARBOXY-LYASE-RELATED"/>
    <property type="match status" value="1"/>
</dbReference>
<dbReference type="PANTHER" id="PTHR30108:SF17">
    <property type="entry name" value="FERULIC ACID DECARBOXYLASE 1"/>
    <property type="match status" value="1"/>
</dbReference>
<dbReference type="Pfam" id="PF01977">
    <property type="entry name" value="UbiD"/>
    <property type="match status" value="1"/>
</dbReference>
<dbReference type="Pfam" id="PF20696">
    <property type="entry name" value="UbiD_C"/>
    <property type="match status" value="1"/>
</dbReference>
<dbReference type="Pfam" id="PF20695">
    <property type="entry name" value="UbiD_N"/>
    <property type="match status" value="1"/>
</dbReference>
<dbReference type="SUPFAM" id="SSF50475">
    <property type="entry name" value="FMN-binding split barrel"/>
    <property type="match status" value="1"/>
</dbReference>
<dbReference type="SUPFAM" id="SSF143968">
    <property type="entry name" value="UbiD C-terminal domain-like"/>
    <property type="match status" value="1"/>
</dbReference>
<comment type="function">
    <text evidence="1">Catalyzes the decarboxylation of 3-octaprenyl-4-hydroxy benzoate to 2-octaprenylphenol, an intermediate step in ubiquinone biosynthesis.</text>
</comment>
<comment type="catalytic activity">
    <reaction evidence="1">
        <text>a 4-hydroxy-3-(all-trans-polyprenyl)benzoate + H(+) = a 2-(all-trans-polyprenyl)phenol + CO2</text>
        <dbReference type="Rhea" id="RHEA:41680"/>
        <dbReference type="Rhea" id="RHEA-COMP:9514"/>
        <dbReference type="Rhea" id="RHEA-COMP:9516"/>
        <dbReference type="ChEBI" id="CHEBI:1269"/>
        <dbReference type="ChEBI" id="CHEBI:15378"/>
        <dbReference type="ChEBI" id="CHEBI:16526"/>
        <dbReference type="ChEBI" id="CHEBI:78396"/>
        <dbReference type="EC" id="4.1.1.98"/>
    </reaction>
</comment>
<comment type="cofactor">
    <cofactor evidence="1">
        <name>prenylated FMN</name>
        <dbReference type="ChEBI" id="CHEBI:87746"/>
    </cofactor>
    <text evidence="1">Binds 1 prenylated FMN per subunit.</text>
</comment>
<comment type="cofactor">
    <cofactor evidence="1">
        <name>Mn(2+)</name>
        <dbReference type="ChEBI" id="CHEBI:29035"/>
    </cofactor>
</comment>
<comment type="pathway">
    <text evidence="1">Cofactor biosynthesis; ubiquinone biosynthesis.</text>
</comment>
<comment type="subunit">
    <text evidence="1">Homohexamer.</text>
</comment>
<comment type="subcellular location">
    <subcellularLocation>
        <location evidence="1">Cell membrane</location>
        <topology evidence="1">Peripheral membrane protein</topology>
    </subcellularLocation>
</comment>
<comment type="similarity">
    <text evidence="1">Belongs to the UbiD family.</text>
</comment>
<protein>
    <recommendedName>
        <fullName evidence="1">3-octaprenyl-4-hydroxybenzoate carboxy-lyase</fullName>
        <ecNumber evidence="1">4.1.1.98</ecNumber>
    </recommendedName>
    <alternativeName>
        <fullName evidence="1">Polyprenyl p-hydroxybenzoate decarboxylase</fullName>
    </alternativeName>
</protein>
<sequence>MKYKDLRDFIAMLEQQGKLKRIAHPVSPHLEMTEIADRVLRAEGPALLFEHPVKPDGTRYDYPVLANLFGTPERVAMGMGADSVSKLREIGQTLAYLKEPEPPKGIKDAFSKLPLLKDIWSMAPNVVKNAPCQEIVWEGEDVDLYQLPIQHCWPEDVAPLVTWGLTVTRGPHKKRQNLGIYRQQLIGINKLIMRWLSHRGGALDYQEFRKLNPDTPYPVAVVLGCDPATILGAVTPVPDTLSEYQFAGLLRGSRTELVKCIGNDLQVPARAEIVLEGVIHPNETALEGPYGDHTGYYNEQDHFPVFTVERITMRENPIYHSTYTGKPPDEPAVLGVALNEVFVPLLQKQFPEITDFYLPPEGCSYRMAVVSMKKQYAGHAKRVMMGCWSFLRQFMYTKFIIVVDDDVDVRDWKEVIWAVTTRMDPVRDTVLMENTPIDYLDFASPVSGLGGKMGLDATNKWPGETDREWGRVIKKDPAVTAKIDEIWEELGL</sequence>
<feature type="chain" id="PRO_0000157361" description="3-octaprenyl-4-hydroxybenzoate carboxy-lyase">
    <location>
        <begin position="1"/>
        <end position="492"/>
    </location>
</feature>
<feature type="active site" description="Proton donor" evidence="1">
    <location>
        <position position="292"/>
    </location>
</feature>
<feature type="binding site" evidence="1">
    <location>
        <position position="177"/>
    </location>
    <ligand>
        <name>Mn(2+)</name>
        <dbReference type="ChEBI" id="CHEBI:29035"/>
    </ligand>
</feature>
<feature type="binding site" evidence="1">
    <location>
        <begin position="180"/>
        <end position="182"/>
    </location>
    <ligand>
        <name>prenylated FMN</name>
        <dbReference type="ChEBI" id="CHEBI:87746"/>
    </ligand>
</feature>
<feature type="binding site" evidence="1">
    <location>
        <begin position="194"/>
        <end position="196"/>
    </location>
    <ligand>
        <name>prenylated FMN</name>
        <dbReference type="ChEBI" id="CHEBI:87746"/>
    </ligand>
</feature>
<feature type="binding site" evidence="1">
    <location>
        <begin position="199"/>
        <end position="200"/>
    </location>
    <ligand>
        <name>prenylated FMN</name>
        <dbReference type="ChEBI" id="CHEBI:87746"/>
    </ligand>
</feature>
<feature type="binding site" evidence="1">
    <location>
        <position position="243"/>
    </location>
    <ligand>
        <name>Mn(2+)</name>
        <dbReference type="ChEBI" id="CHEBI:29035"/>
    </ligand>
</feature>
<accession>Q9JT68</accession>
<accession>A1ITF0</accession>
<reference key="1">
    <citation type="journal article" date="2000" name="Nature">
        <title>Complete DNA sequence of a serogroup A strain of Neisseria meningitidis Z2491.</title>
        <authorList>
            <person name="Parkhill J."/>
            <person name="Achtman M."/>
            <person name="James K.D."/>
            <person name="Bentley S.D."/>
            <person name="Churcher C.M."/>
            <person name="Klee S.R."/>
            <person name="Morelli G."/>
            <person name="Basham D."/>
            <person name="Brown D."/>
            <person name="Chillingworth T."/>
            <person name="Davies R.M."/>
            <person name="Davis P."/>
            <person name="Devlin K."/>
            <person name="Feltwell T."/>
            <person name="Hamlin N."/>
            <person name="Holroyd S."/>
            <person name="Jagels K."/>
            <person name="Leather S."/>
            <person name="Moule S."/>
            <person name="Mungall K.L."/>
            <person name="Quail M.A."/>
            <person name="Rajandream M.A."/>
            <person name="Rutherford K.M."/>
            <person name="Simmonds M."/>
            <person name="Skelton J."/>
            <person name="Whitehead S."/>
            <person name="Spratt B.G."/>
            <person name="Barrell B.G."/>
        </authorList>
    </citation>
    <scope>NUCLEOTIDE SEQUENCE [LARGE SCALE GENOMIC DNA]</scope>
    <source>
        <strain>DSM 15465 / Z2491</strain>
    </source>
</reference>
<gene>
    <name evidence="1" type="primary">ubiD</name>
    <name type="ordered locus">NMA1952</name>
</gene>
<name>UBID_NEIMA</name>
<keyword id="KW-1003">Cell membrane</keyword>
<keyword id="KW-0210">Decarboxylase</keyword>
<keyword id="KW-0285">Flavoprotein</keyword>
<keyword id="KW-0288">FMN</keyword>
<keyword id="KW-0456">Lyase</keyword>
<keyword id="KW-0464">Manganese</keyword>
<keyword id="KW-0472">Membrane</keyword>
<keyword id="KW-0479">Metal-binding</keyword>
<keyword id="KW-0831">Ubiquinone biosynthesis</keyword>
<organism>
    <name type="scientific">Neisseria meningitidis serogroup A / serotype 4A (strain DSM 15465 / Z2491)</name>
    <dbReference type="NCBI Taxonomy" id="122587"/>
    <lineage>
        <taxon>Bacteria</taxon>
        <taxon>Pseudomonadati</taxon>
        <taxon>Pseudomonadota</taxon>
        <taxon>Betaproteobacteria</taxon>
        <taxon>Neisseriales</taxon>
        <taxon>Neisseriaceae</taxon>
        <taxon>Neisseria</taxon>
    </lineage>
</organism>